<keyword id="KW-0687">Ribonucleoprotein</keyword>
<keyword id="KW-0689">Ribosomal protein</keyword>
<evidence type="ECO:0000305" key="1"/>
<comment type="similarity">
    <text evidence="1">Belongs to the eukaryotic ribosomal protein eS7 family.</text>
</comment>
<sequence>MAIGSKIIKPGGSDPDDFEKSIAQALVELEANSDLKPYLRDLHITRAREIEFGSKKAVIIYVPIPQQKVFQKIQIILVRELEKKFSGKHVVVIGERKILPKPTRKARNPLKQKRPRSRTLTAVYDAILEDLVFPAEIVGKRIRVKLDGSQLVKVHLDKNQQTTIEHKVDTFTSVYKKLTGRDVTFEFPDNYLNV</sequence>
<organism>
    <name type="scientific">Drosophila yakuba</name>
    <name type="common">Fruit fly</name>
    <dbReference type="NCBI Taxonomy" id="7245"/>
    <lineage>
        <taxon>Eukaryota</taxon>
        <taxon>Metazoa</taxon>
        <taxon>Ecdysozoa</taxon>
        <taxon>Arthropoda</taxon>
        <taxon>Hexapoda</taxon>
        <taxon>Insecta</taxon>
        <taxon>Pterygota</taxon>
        <taxon>Neoptera</taxon>
        <taxon>Endopterygota</taxon>
        <taxon>Diptera</taxon>
        <taxon>Brachycera</taxon>
        <taxon>Muscomorpha</taxon>
        <taxon>Ephydroidea</taxon>
        <taxon>Drosophilidae</taxon>
        <taxon>Drosophila</taxon>
        <taxon>Sophophora</taxon>
    </lineage>
</organism>
<proteinExistence type="evidence at transcript level"/>
<dbReference type="EMBL" id="AY231915">
    <property type="protein sequence ID" value="AAR09938.1"/>
    <property type="molecule type" value="mRNA"/>
</dbReference>
<dbReference type="EMBL" id="AY232053">
    <property type="protein sequence ID" value="AAR10076.1"/>
    <property type="molecule type" value="mRNA"/>
</dbReference>
<dbReference type="EMBL" id="CM000160">
    <property type="protein sequence ID" value="EDW99080.1"/>
    <property type="molecule type" value="Genomic_DNA"/>
</dbReference>
<dbReference type="SMR" id="P62085"/>
<dbReference type="EnsemblMetazoa" id="FBtr0269918">
    <property type="protein sequence ID" value="FBpp0268410"/>
    <property type="gene ID" value="FBgn0068359"/>
</dbReference>
<dbReference type="EnsemblMetazoa" id="XM_002099332.4">
    <property type="protein sequence ID" value="XP_002099368.1"/>
    <property type="gene ID" value="LOC6538855"/>
</dbReference>
<dbReference type="GeneID" id="6538855"/>
<dbReference type="KEGG" id="dya:Dyak_GE23400"/>
<dbReference type="CTD" id="6201"/>
<dbReference type="eggNOG" id="KOG3320">
    <property type="taxonomic scope" value="Eukaryota"/>
</dbReference>
<dbReference type="HOGENOM" id="CLU_088621_1_2_1"/>
<dbReference type="OMA" id="AAYHKVQ"/>
<dbReference type="OrthoDB" id="1724687at2759"/>
<dbReference type="PhylomeDB" id="P62085"/>
<dbReference type="ChiTaRS" id="RpS7">
    <property type="organism name" value="fly"/>
</dbReference>
<dbReference type="Proteomes" id="UP000002282">
    <property type="component" value="Chromosome 3R"/>
</dbReference>
<dbReference type="GO" id="GO:0030686">
    <property type="term" value="C:90S preribosome"/>
    <property type="evidence" value="ECO:0007669"/>
    <property type="project" value="TreeGrafter"/>
</dbReference>
<dbReference type="GO" id="GO:0022627">
    <property type="term" value="C:cytosolic small ribosomal subunit"/>
    <property type="evidence" value="ECO:0007669"/>
    <property type="project" value="TreeGrafter"/>
</dbReference>
<dbReference type="GO" id="GO:0032040">
    <property type="term" value="C:small-subunit processome"/>
    <property type="evidence" value="ECO:0007669"/>
    <property type="project" value="TreeGrafter"/>
</dbReference>
<dbReference type="GO" id="GO:0003735">
    <property type="term" value="F:structural constituent of ribosome"/>
    <property type="evidence" value="ECO:0007669"/>
    <property type="project" value="EnsemblMetazoa"/>
</dbReference>
<dbReference type="GO" id="GO:0042274">
    <property type="term" value="P:ribosomal small subunit biogenesis"/>
    <property type="evidence" value="ECO:0007669"/>
    <property type="project" value="TreeGrafter"/>
</dbReference>
<dbReference type="GO" id="GO:0006364">
    <property type="term" value="P:rRNA processing"/>
    <property type="evidence" value="ECO:0007669"/>
    <property type="project" value="TreeGrafter"/>
</dbReference>
<dbReference type="GO" id="GO:0006412">
    <property type="term" value="P:translation"/>
    <property type="evidence" value="ECO:0007669"/>
    <property type="project" value="InterPro"/>
</dbReference>
<dbReference type="InterPro" id="IPR000554">
    <property type="entry name" value="Ribosomal_eS7"/>
</dbReference>
<dbReference type="InterPro" id="IPR047861">
    <property type="entry name" value="Ribosomal_eS7_CS"/>
</dbReference>
<dbReference type="PANTHER" id="PTHR11278">
    <property type="entry name" value="40S RIBOSOMAL PROTEIN S7"/>
    <property type="match status" value="1"/>
</dbReference>
<dbReference type="PANTHER" id="PTHR11278:SF0">
    <property type="entry name" value="SMALL RIBOSOMAL SUBUNIT PROTEIN ES7"/>
    <property type="match status" value="1"/>
</dbReference>
<dbReference type="Pfam" id="PF01251">
    <property type="entry name" value="Ribosomal_S7e"/>
    <property type="match status" value="1"/>
</dbReference>
<dbReference type="PROSITE" id="PS00948">
    <property type="entry name" value="RIBOSOMAL_S7E"/>
    <property type="match status" value="1"/>
</dbReference>
<feature type="chain" id="PRO_0000174201" description="Small ribosomal subunit protein eS7">
    <location>
        <begin position="1"/>
        <end position="194"/>
    </location>
</feature>
<protein>
    <recommendedName>
        <fullName evidence="1">Small ribosomal subunit protein eS7</fullName>
    </recommendedName>
    <alternativeName>
        <fullName>40S ribosomal protein S7</fullName>
    </alternativeName>
</protein>
<name>RS7_DROYA</name>
<reference key="1">
    <citation type="journal article" date="2003" name="Genome Res.">
        <title>An evolutionary analysis of orphan genes in Drosophila.</title>
        <authorList>
            <person name="Domazet-Loso T."/>
            <person name="Tautz D."/>
        </authorList>
    </citation>
    <scope>NUCLEOTIDE SEQUENCE [MRNA]</scope>
</reference>
<reference key="2">
    <citation type="journal article" date="2007" name="Nature">
        <title>Evolution of genes and genomes on the Drosophila phylogeny.</title>
        <authorList>
            <consortium name="Drosophila 12 genomes consortium"/>
        </authorList>
    </citation>
    <scope>NUCLEOTIDE SEQUENCE [LARGE SCALE GENOMIC DNA]</scope>
    <source>
        <strain>Tai18E2 / Tucson 14021-0261.01</strain>
    </source>
</reference>
<gene>
    <name type="primary">RpS7</name>
    <name type="ORF">GE23400</name>
</gene>
<accession>P62085</accession>
<accession>B4PLU3</accession>
<accession>Q6XHX9</accession>